<protein>
    <recommendedName>
        <fullName evidence="1">4-hydroxy-tetrahydrodipicolinate reductase</fullName>
        <shortName evidence="1">HTPA reductase</shortName>
        <ecNumber evidence="1">1.17.1.8</ecNumber>
    </recommendedName>
</protein>
<keyword id="KW-0028">Amino-acid biosynthesis</keyword>
<keyword id="KW-0963">Cytoplasm</keyword>
<keyword id="KW-0220">Diaminopimelate biosynthesis</keyword>
<keyword id="KW-0457">Lysine biosynthesis</keyword>
<keyword id="KW-0520">NAD</keyword>
<keyword id="KW-0521">NADP</keyword>
<keyword id="KW-0560">Oxidoreductase</keyword>
<keyword id="KW-1185">Reference proteome</keyword>
<reference key="1">
    <citation type="journal article" date="2014" name="Stand. Genomic Sci.">
        <title>Complete genome sequence of Burkholderia phymatum STM815(T), a broad host range and efficient nitrogen-fixing symbiont of Mimosa species.</title>
        <authorList>
            <person name="Moulin L."/>
            <person name="Klonowska A."/>
            <person name="Caroline B."/>
            <person name="Booth K."/>
            <person name="Vriezen J.A."/>
            <person name="Melkonian R."/>
            <person name="James E.K."/>
            <person name="Young J.P."/>
            <person name="Bena G."/>
            <person name="Hauser L."/>
            <person name="Land M."/>
            <person name="Kyrpides N."/>
            <person name="Bruce D."/>
            <person name="Chain P."/>
            <person name="Copeland A."/>
            <person name="Pitluck S."/>
            <person name="Woyke T."/>
            <person name="Lizotte-Waniewski M."/>
            <person name="Bristow J."/>
            <person name="Riley M."/>
        </authorList>
    </citation>
    <scope>NUCLEOTIDE SEQUENCE [LARGE SCALE GENOMIC DNA]</scope>
    <source>
        <strain>DSM 17167 / CIP 108236 / LMG 21445 / STM815</strain>
    </source>
</reference>
<organism>
    <name type="scientific">Paraburkholderia phymatum (strain DSM 17167 / CIP 108236 / LMG 21445 / STM815)</name>
    <name type="common">Burkholderia phymatum</name>
    <dbReference type="NCBI Taxonomy" id="391038"/>
    <lineage>
        <taxon>Bacteria</taxon>
        <taxon>Pseudomonadati</taxon>
        <taxon>Pseudomonadota</taxon>
        <taxon>Betaproteobacteria</taxon>
        <taxon>Burkholderiales</taxon>
        <taxon>Burkholderiaceae</taxon>
        <taxon>Paraburkholderia</taxon>
    </lineage>
</organism>
<proteinExistence type="inferred from homology"/>
<comment type="function">
    <text evidence="1">Catalyzes the conversion of 4-hydroxy-tetrahydrodipicolinate (HTPA) to tetrahydrodipicolinate.</text>
</comment>
<comment type="catalytic activity">
    <reaction evidence="1">
        <text>(S)-2,3,4,5-tetrahydrodipicolinate + NAD(+) + H2O = (2S,4S)-4-hydroxy-2,3,4,5-tetrahydrodipicolinate + NADH + H(+)</text>
        <dbReference type="Rhea" id="RHEA:35323"/>
        <dbReference type="ChEBI" id="CHEBI:15377"/>
        <dbReference type="ChEBI" id="CHEBI:15378"/>
        <dbReference type="ChEBI" id="CHEBI:16845"/>
        <dbReference type="ChEBI" id="CHEBI:57540"/>
        <dbReference type="ChEBI" id="CHEBI:57945"/>
        <dbReference type="ChEBI" id="CHEBI:67139"/>
        <dbReference type="EC" id="1.17.1.8"/>
    </reaction>
</comment>
<comment type="catalytic activity">
    <reaction evidence="1">
        <text>(S)-2,3,4,5-tetrahydrodipicolinate + NADP(+) + H2O = (2S,4S)-4-hydroxy-2,3,4,5-tetrahydrodipicolinate + NADPH + H(+)</text>
        <dbReference type="Rhea" id="RHEA:35331"/>
        <dbReference type="ChEBI" id="CHEBI:15377"/>
        <dbReference type="ChEBI" id="CHEBI:15378"/>
        <dbReference type="ChEBI" id="CHEBI:16845"/>
        <dbReference type="ChEBI" id="CHEBI:57783"/>
        <dbReference type="ChEBI" id="CHEBI:58349"/>
        <dbReference type="ChEBI" id="CHEBI:67139"/>
        <dbReference type="EC" id="1.17.1.8"/>
    </reaction>
</comment>
<comment type="pathway">
    <text evidence="1">Amino-acid biosynthesis; L-lysine biosynthesis via DAP pathway; (S)-tetrahydrodipicolinate from L-aspartate: step 4/4.</text>
</comment>
<comment type="subcellular location">
    <subcellularLocation>
        <location evidence="1">Cytoplasm</location>
    </subcellularLocation>
</comment>
<comment type="similarity">
    <text evidence="1">Belongs to the DapB family.</text>
</comment>
<comment type="caution">
    <text evidence="2">Was originally thought to be a dihydrodipicolinate reductase (DHDPR), catalyzing the conversion of dihydrodipicolinate to tetrahydrodipicolinate. However, it was shown in E.coli that the substrate of the enzymatic reaction is not dihydrodipicolinate (DHDP) but in fact (2S,4S)-4-hydroxy-2,3,4,5-tetrahydrodipicolinic acid (HTPA), the product released by the DapA-catalyzed reaction.</text>
</comment>
<evidence type="ECO:0000255" key="1">
    <source>
        <dbReference type="HAMAP-Rule" id="MF_00102"/>
    </source>
</evidence>
<evidence type="ECO:0000305" key="2"/>
<accession>B2JGX9</accession>
<sequence>MKIAIAGASGRMGRMLIETVLNDPEVKLSGALDRTGAPQLGQDAGAFLGKQTGVLMSDDIDAVLAQSDYLIDFTRPDGTLAHIEAALRTNTKLVIGTTGFDDAQKARIRAASEKTGIVFASNFSVGVNVTMKLLEFAARHFSQGYDIEIIEAHHRHKVDAPSGTALTMGEVIAGALGRKLEDCAVYAREGVTGERDPSTIGFSAIRGGDIVGDHTVLFAGIGERIEITHKSASRLSYAQGALRAVRFLEGHSNGLFDMQDVLGLR</sequence>
<gene>
    <name evidence="1" type="primary">dapB</name>
    <name type="ordered locus">Bphy_2591</name>
</gene>
<dbReference type="EC" id="1.17.1.8" evidence="1"/>
<dbReference type="EMBL" id="CP001043">
    <property type="protein sequence ID" value="ACC71763.1"/>
    <property type="molecule type" value="Genomic_DNA"/>
</dbReference>
<dbReference type="RefSeq" id="WP_012401965.1">
    <property type="nucleotide sequence ID" value="NC_010622.1"/>
</dbReference>
<dbReference type="SMR" id="B2JGX9"/>
<dbReference type="STRING" id="391038.Bphy_2591"/>
<dbReference type="KEGG" id="bph:Bphy_2591"/>
<dbReference type="eggNOG" id="COG0289">
    <property type="taxonomic scope" value="Bacteria"/>
</dbReference>
<dbReference type="HOGENOM" id="CLU_047479_2_1_4"/>
<dbReference type="OrthoDB" id="9790352at2"/>
<dbReference type="UniPathway" id="UPA00034">
    <property type="reaction ID" value="UER00018"/>
</dbReference>
<dbReference type="Proteomes" id="UP000001192">
    <property type="component" value="Chromosome 1"/>
</dbReference>
<dbReference type="GO" id="GO:0005829">
    <property type="term" value="C:cytosol"/>
    <property type="evidence" value="ECO:0007669"/>
    <property type="project" value="TreeGrafter"/>
</dbReference>
<dbReference type="GO" id="GO:0008839">
    <property type="term" value="F:4-hydroxy-tetrahydrodipicolinate reductase"/>
    <property type="evidence" value="ECO:0007669"/>
    <property type="project" value="UniProtKB-EC"/>
</dbReference>
<dbReference type="GO" id="GO:0051287">
    <property type="term" value="F:NAD binding"/>
    <property type="evidence" value="ECO:0007669"/>
    <property type="project" value="UniProtKB-UniRule"/>
</dbReference>
<dbReference type="GO" id="GO:0050661">
    <property type="term" value="F:NADP binding"/>
    <property type="evidence" value="ECO:0007669"/>
    <property type="project" value="UniProtKB-UniRule"/>
</dbReference>
<dbReference type="GO" id="GO:0016726">
    <property type="term" value="F:oxidoreductase activity, acting on CH or CH2 groups, NAD or NADP as acceptor"/>
    <property type="evidence" value="ECO:0007669"/>
    <property type="project" value="UniProtKB-UniRule"/>
</dbReference>
<dbReference type="GO" id="GO:0019877">
    <property type="term" value="P:diaminopimelate biosynthetic process"/>
    <property type="evidence" value="ECO:0007669"/>
    <property type="project" value="UniProtKB-UniRule"/>
</dbReference>
<dbReference type="GO" id="GO:0009089">
    <property type="term" value="P:lysine biosynthetic process via diaminopimelate"/>
    <property type="evidence" value="ECO:0007669"/>
    <property type="project" value="UniProtKB-UniRule"/>
</dbReference>
<dbReference type="CDD" id="cd02274">
    <property type="entry name" value="DHDPR_N"/>
    <property type="match status" value="1"/>
</dbReference>
<dbReference type="FunFam" id="3.30.360.10:FF:000004">
    <property type="entry name" value="4-hydroxy-tetrahydrodipicolinate reductase"/>
    <property type="match status" value="1"/>
</dbReference>
<dbReference type="FunFam" id="3.40.50.720:FF:000048">
    <property type="entry name" value="4-hydroxy-tetrahydrodipicolinate reductase"/>
    <property type="match status" value="1"/>
</dbReference>
<dbReference type="Gene3D" id="3.30.360.10">
    <property type="entry name" value="Dihydrodipicolinate Reductase, domain 2"/>
    <property type="match status" value="1"/>
</dbReference>
<dbReference type="Gene3D" id="3.40.50.720">
    <property type="entry name" value="NAD(P)-binding Rossmann-like Domain"/>
    <property type="match status" value="1"/>
</dbReference>
<dbReference type="HAMAP" id="MF_00102">
    <property type="entry name" value="DapB"/>
    <property type="match status" value="1"/>
</dbReference>
<dbReference type="InterPro" id="IPR022663">
    <property type="entry name" value="DapB_C"/>
</dbReference>
<dbReference type="InterPro" id="IPR000846">
    <property type="entry name" value="DapB_N"/>
</dbReference>
<dbReference type="InterPro" id="IPR022664">
    <property type="entry name" value="DapB_N_CS"/>
</dbReference>
<dbReference type="InterPro" id="IPR023940">
    <property type="entry name" value="DHDPR_bac"/>
</dbReference>
<dbReference type="InterPro" id="IPR036291">
    <property type="entry name" value="NAD(P)-bd_dom_sf"/>
</dbReference>
<dbReference type="NCBIfam" id="TIGR00036">
    <property type="entry name" value="dapB"/>
    <property type="match status" value="1"/>
</dbReference>
<dbReference type="PANTHER" id="PTHR20836:SF0">
    <property type="entry name" value="4-HYDROXY-TETRAHYDRODIPICOLINATE REDUCTASE 1, CHLOROPLASTIC-RELATED"/>
    <property type="match status" value="1"/>
</dbReference>
<dbReference type="PANTHER" id="PTHR20836">
    <property type="entry name" value="DIHYDRODIPICOLINATE REDUCTASE"/>
    <property type="match status" value="1"/>
</dbReference>
<dbReference type="Pfam" id="PF05173">
    <property type="entry name" value="DapB_C"/>
    <property type="match status" value="1"/>
</dbReference>
<dbReference type="Pfam" id="PF01113">
    <property type="entry name" value="DapB_N"/>
    <property type="match status" value="1"/>
</dbReference>
<dbReference type="PIRSF" id="PIRSF000161">
    <property type="entry name" value="DHPR"/>
    <property type="match status" value="1"/>
</dbReference>
<dbReference type="SUPFAM" id="SSF55347">
    <property type="entry name" value="Glyceraldehyde-3-phosphate dehydrogenase-like, C-terminal domain"/>
    <property type="match status" value="1"/>
</dbReference>
<dbReference type="SUPFAM" id="SSF51735">
    <property type="entry name" value="NAD(P)-binding Rossmann-fold domains"/>
    <property type="match status" value="1"/>
</dbReference>
<dbReference type="PROSITE" id="PS01298">
    <property type="entry name" value="DAPB"/>
    <property type="match status" value="1"/>
</dbReference>
<name>DAPB_PARP8</name>
<feature type="chain" id="PRO_1000117362" description="4-hydroxy-tetrahydrodipicolinate reductase">
    <location>
        <begin position="1"/>
        <end position="265"/>
    </location>
</feature>
<feature type="active site" description="Proton donor/acceptor" evidence="1">
    <location>
        <position position="153"/>
    </location>
</feature>
<feature type="active site" description="Proton donor" evidence="1">
    <location>
        <position position="157"/>
    </location>
</feature>
<feature type="binding site" evidence="1">
    <location>
        <begin position="7"/>
        <end position="12"/>
    </location>
    <ligand>
        <name>NAD(+)</name>
        <dbReference type="ChEBI" id="CHEBI:57540"/>
    </ligand>
</feature>
<feature type="binding site" evidence="1">
    <location>
        <position position="33"/>
    </location>
    <ligand>
        <name>NAD(+)</name>
        <dbReference type="ChEBI" id="CHEBI:57540"/>
    </ligand>
</feature>
<feature type="binding site" evidence="1">
    <location>
        <position position="34"/>
    </location>
    <ligand>
        <name>NADP(+)</name>
        <dbReference type="ChEBI" id="CHEBI:58349"/>
    </ligand>
</feature>
<feature type="binding site" evidence="1">
    <location>
        <begin position="96"/>
        <end position="98"/>
    </location>
    <ligand>
        <name>NAD(+)</name>
        <dbReference type="ChEBI" id="CHEBI:57540"/>
    </ligand>
</feature>
<feature type="binding site" evidence="1">
    <location>
        <begin position="120"/>
        <end position="123"/>
    </location>
    <ligand>
        <name>NAD(+)</name>
        <dbReference type="ChEBI" id="CHEBI:57540"/>
    </ligand>
</feature>
<feature type="binding site" evidence="1">
    <location>
        <position position="154"/>
    </location>
    <ligand>
        <name>(S)-2,3,4,5-tetrahydrodipicolinate</name>
        <dbReference type="ChEBI" id="CHEBI:16845"/>
    </ligand>
</feature>
<feature type="binding site" evidence="1">
    <location>
        <begin position="163"/>
        <end position="164"/>
    </location>
    <ligand>
        <name>(S)-2,3,4,5-tetrahydrodipicolinate</name>
        <dbReference type="ChEBI" id="CHEBI:16845"/>
    </ligand>
</feature>